<proteinExistence type="inferred from homology"/>
<name>RL32_AERHH</name>
<evidence type="ECO:0000255" key="1">
    <source>
        <dbReference type="HAMAP-Rule" id="MF_00340"/>
    </source>
</evidence>
<evidence type="ECO:0000305" key="2"/>
<gene>
    <name evidence="1" type="primary">rpmF</name>
    <name type="ordered locus">AHA_2247</name>
</gene>
<comment type="similarity">
    <text evidence="1">Belongs to the bacterial ribosomal protein bL32 family.</text>
</comment>
<protein>
    <recommendedName>
        <fullName evidence="1">Large ribosomal subunit protein bL32</fullName>
    </recommendedName>
    <alternativeName>
        <fullName evidence="2">50S ribosomal protein L32</fullName>
    </alternativeName>
</protein>
<feature type="chain" id="PRO_0000296414" description="Large ribosomal subunit protein bL32">
    <location>
        <begin position="1"/>
        <end position="55"/>
    </location>
</feature>
<keyword id="KW-1185">Reference proteome</keyword>
<keyword id="KW-0687">Ribonucleoprotein</keyword>
<keyword id="KW-0689">Ribosomal protein</keyword>
<accession>A0KKH0</accession>
<organism>
    <name type="scientific">Aeromonas hydrophila subsp. hydrophila (strain ATCC 7966 / DSM 30187 / BCRC 13018 / CCUG 14551 / JCM 1027 / KCTC 2358 / NCIMB 9240 / NCTC 8049)</name>
    <dbReference type="NCBI Taxonomy" id="380703"/>
    <lineage>
        <taxon>Bacteria</taxon>
        <taxon>Pseudomonadati</taxon>
        <taxon>Pseudomonadota</taxon>
        <taxon>Gammaproteobacteria</taxon>
        <taxon>Aeromonadales</taxon>
        <taxon>Aeromonadaceae</taxon>
        <taxon>Aeromonas</taxon>
    </lineage>
</organism>
<sequence length="55" mass="6230">MAVQQNRKTRAKRGMRRSHDALTTAALTVDQTSGEIHRRHHVTADGFYRGKKVIA</sequence>
<reference key="1">
    <citation type="journal article" date="2006" name="J. Bacteriol.">
        <title>Genome sequence of Aeromonas hydrophila ATCC 7966T: jack of all trades.</title>
        <authorList>
            <person name="Seshadri R."/>
            <person name="Joseph S.W."/>
            <person name="Chopra A.K."/>
            <person name="Sha J."/>
            <person name="Shaw J."/>
            <person name="Graf J."/>
            <person name="Haft D.H."/>
            <person name="Wu M."/>
            <person name="Ren Q."/>
            <person name="Rosovitz M.J."/>
            <person name="Madupu R."/>
            <person name="Tallon L."/>
            <person name="Kim M."/>
            <person name="Jin S."/>
            <person name="Vuong H."/>
            <person name="Stine O.C."/>
            <person name="Ali A."/>
            <person name="Horneman A.J."/>
            <person name="Heidelberg J.F."/>
        </authorList>
    </citation>
    <scope>NUCLEOTIDE SEQUENCE [LARGE SCALE GENOMIC DNA]</scope>
    <source>
        <strain>ATCC 7966 / DSM 30187 / BCRC 13018 / CCUG 14551 / JCM 1027 / KCTC 2358 / NCIMB 9240 / NCTC 8049</strain>
    </source>
</reference>
<dbReference type="EMBL" id="CP000462">
    <property type="protein sequence ID" value="ABK39763.1"/>
    <property type="molecule type" value="Genomic_DNA"/>
</dbReference>
<dbReference type="RefSeq" id="WP_005300935.1">
    <property type="nucleotide sequence ID" value="NC_008570.1"/>
</dbReference>
<dbReference type="RefSeq" id="YP_856771.1">
    <property type="nucleotide sequence ID" value="NC_008570.1"/>
</dbReference>
<dbReference type="SMR" id="A0KKH0"/>
<dbReference type="STRING" id="380703.AHA_2247"/>
<dbReference type="EnsemblBacteria" id="ABK39763">
    <property type="protein sequence ID" value="ABK39763"/>
    <property type="gene ID" value="AHA_2247"/>
</dbReference>
<dbReference type="GeneID" id="97859374"/>
<dbReference type="KEGG" id="aha:AHA_2247"/>
<dbReference type="PATRIC" id="fig|380703.7.peg.2247"/>
<dbReference type="eggNOG" id="COG0333">
    <property type="taxonomic scope" value="Bacteria"/>
</dbReference>
<dbReference type="HOGENOM" id="CLU_129084_2_1_6"/>
<dbReference type="OrthoDB" id="9801927at2"/>
<dbReference type="PRO" id="PR:A0KKH0"/>
<dbReference type="Proteomes" id="UP000000756">
    <property type="component" value="Chromosome"/>
</dbReference>
<dbReference type="GO" id="GO:0015934">
    <property type="term" value="C:large ribosomal subunit"/>
    <property type="evidence" value="ECO:0007669"/>
    <property type="project" value="InterPro"/>
</dbReference>
<dbReference type="GO" id="GO:0003735">
    <property type="term" value="F:structural constituent of ribosome"/>
    <property type="evidence" value="ECO:0007669"/>
    <property type="project" value="InterPro"/>
</dbReference>
<dbReference type="GO" id="GO:0006412">
    <property type="term" value="P:translation"/>
    <property type="evidence" value="ECO:0007669"/>
    <property type="project" value="UniProtKB-UniRule"/>
</dbReference>
<dbReference type="HAMAP" id="MF_00340">
    <property type="entry name" value="Ribosomal_bL32"/>
    <property type="match status" value="1"/>
</dbReference>
<dbReference type="InterPro" id="IPR002677">
    <property type="entry name" value="Ribosomal_bL32"/>
</dbReference>
<dbReference type="InterPro" id="IPR044957">
    <property type="entry name" value="Ribosomal_bL32_bact"/>
</dbReference>
<dbReference type="InterPro" id="IPR011332">
    <property type="entry name" value="Ribosomal_zn-bd"/>
</dbReference>
<dbReference type="NCBIfam" id="TIGR01031">
    <property type="entry name" value="rpmF_bact"/>
    <property type="match status" value="1"/>
</dbReference>
<dbReference type="PANTHER" id="PTHR35534">
    <property type="entry name" value="50S RIBOSOMAL PROTEIN L32"/>
    <property type="match status" value="1"/>
</dbReference>
<dbReference type="PANTHER" id="PTHR35534:SF1">
    <property type="entry name" value="LARGE RIBOSOMAL SUBUNIT PROTEIN BL32"/>
    <property type="match status" value="1"/>
</dbReference>
<dbReference type="Pfam" id="PF01783">
    <property type="entry name" value="Ribosomal_L32p"/>
    <property type="match status" value="1"/>
</dbReference>
<dbReference type="SUPFAM" id="SSF57829">
    <property type="entry name" value="Zn-binding ribosomal proteins"/>
    <property type="match status" value="1"/>
</dbReference>